<proteinExistence type="inferred from homology"/>
<protein>
    <recommendedName>
        <fullName>Lipase 3</fullName>
        <ecNumber>3.1.1.3</ecNumber>
    </recommendedName>
</protein>
<gene>
    <name type="primary">LIP3</name>
    <name type="ordered locus">YALI0B08030g</name>
</gene>
<feature type="signal peptide" evidence="2">
    <location>
        <begin position="1"/>
        <end status="unknown"/>
    </location>
</feature>
<feature type="chain" id="PRO_0000008628" description="Lipase 3">
    <location>
        <begin status="unknown"/>
        <end position="498"/>
    </location>
</feature>
<feature type="active site" description="Acyl-ester intermediate" evidence="3">
    <location>
        <position position="200"/>
    </location>
</feature>
<feature type="active site" description="Charge relay system" evidence="1">
    <location>
        <position position="409"/>
    </location>
</feature>
<feature type="glycosylation site" description="N-linked (GlcNAc...) asparagine" evidence="2">
    <location>
        <position position="193"/>
    </location>
</feature>
<feature type="glycosylation site" description="N-linked (GlcNAc...) asparagine" evidence="2">
    <location>
        <position position="384"/>
    </location>
</feature>
<feature type="glycosylation site" description="N-linked (GlcNAc...) asparagine" evidence="2">
    <location>
        <position position="418"/>
    </location>
</feature>
<feature type="disulfide bond" evidence="1">
    <location>
        <begin position="60"/>
        <end position="91"/>
    </location>
</feature>
<dbReference type="EC" id="3.1.1.3"/>
<dbReference type="EMBL" id="AJ249751">
    <property type="protein sequence ID" value="CAC43239.1"/>
    <property type="molecule type" value="Genomic_DNA"/>
</dbReference>
<dbReference type="EMBL" id="CR382128">
    <property type="protein sequence ID" value="CAG82865.1"/>
    <property type="molecule type" value="Genomic_DNA"/>
</dbReference>
<dbReference type="RefSeq" id="XP_500624.1">
    <property type="nucleotide sequence ID" value="XM_500624.1"/>
</dbReference>
<dbReference type="SMR" id="Q96VC9"/>
<dbReference type="STRING" id="284591.Q96VC9"/>
<dbReference type="ESTHER" id="yarli-LIP3">
    <property type="family name" value="Fungal_carboxylesterase_lipase"/>
</dbReference>
<dbReference type="MEROPS" id="S09.A63"/>
<dbReference type="GlyCosmos" id="Q96VC9">
    <property type="glycosylation" value="3 sites, No reported glycans"/>
</dbReference>
<dbReference type="EnsemblFungi" id="CAG82865">
    <property type="protein sequence ID" value="CAG82865"/>
    <property type="gene ID" value="YALI0_B08030g"/>
</dbReference>
<dbReference type="KEGG" id="yli:2907630"/>
<dbReference type="VEuPathDB" id="FungiDB:YALI0_B08030g"/>
<dbReference type="HOGENOM" id="CLU_006586_14_0_1"/>
<dbReference type="InParanoid" id="Q96VC9"/>
<dbReference type="OrthoDB" id="115088at4891"/>
<dbReference type="Proteomes" id="UP000001300">
    <property type="component" value="Chromosome B"/>
</dbReference>
<dbReference type="GO" id="GO:0004806">
    <property type="term" value="F:triacylglycerol lipase activity"/>
    <property type="evidence" value="ECO:0007669"/>
    <property type="project" value="UniProtKB-EC"/>
</dbReference>
<dbReference type="GO" id="GO:0016042">
    <property type="term" value="P:lipid catabolic process"/>
    <property type="evidence" value="ECO:0007669"/>
    <property type="project" value="UniProtKB-KW"/>
</dbReference>
<dbReference type="Gene3D" id="3.40.50.1820">
    <property type="entry name" value="alpha/beta hydrolase"/>
    <property type="match status" value="1"/>
</dbReference>
<dbReference type="InterPro" id="IPR029058">
    <property type="entry name" value="AB_hydrolase_fold"/>
</dbReference>
<dbReference type="InterPro" id="IPR002018">
    <property type="entry name" value="CarbesteraseB"/>
</dbReference>
<dbReference type="InterPro" id="IPR019826">
    <property type="entry name" value="Carboxylesterase_B_AS"/>
</dbReference>
<dbReference type="PANTHER" id="PTHR43142">
    <property type="entry name" value="CARBOXYLIC ESTER HYDROLASE"/>
    <property type="match status" value="1"/>
</dbReference>
<dbReference type="PANTHER" id="PTHR43142:SF1">
    <property type="entry name" value="CARBOXYLIC ESTER HYDROLASE"/>
    <property type="match status" value="1"/>
</dbReference>
<dbReference type="Pfam" id="PF00135">
    <property type="entry name" value="COesterase"/>
    <property type="match status" value="1"/>
</dbReference>
<dbReference type="SUPFAM" id="SSF53474">
    <property type="entry name" value="alpha/beta-Hydrolases"/>
    <property type="match status" value="1"/>
</dbReference>
<dbReference type="PROSITE" id="PS00122">
    <property type="entry name" value="CARBOXYLESTERASE_B_1"/>
    <property type="match status" value="1"/>
</dbReference>
<organism>
    <name type="scientific">Yarrowia lipolytica (strain CLIB 122 / E 150)</name>
    <name type="common">Yeast</name>
    <name type="synonym">Candida lipolytica</name>
    <dbReference type="NCBI Taxonomy" id="284591"/>
    <lineage>
        <taxon>Eukaryota</taxon>
        <taxon>Fungi</taxon>
        <taxon>Dikarya</taxon>
        <taxon>Ascomycota</taxon>
        <taxon>Saccharomycotina</taxon>
        <taxon>Dipodascomycetes</taxon>
        <taxon>Dipodascales</taxon>
        <taxon>Dipodascales incertae sedis</taxon>
        <taxon>Yarrowia</taxon>
    </lineage>
</organism>
<comment type="catalytic activity">
    <reaction>
        <text>a triacylglycerol + H2O = a diacylglycerol + a fatty acid + H(+)</text>
        <dbReference type="Rhea" id="RHEA:12044"/>
        <dbReference type="ChEBI" id="CHEBI:15377"/>
        <dbReference type="ChEBI" id="CHEBI:15378"/>
        <dbReference type="ChEBI" id="CHEBI:17855"/>
        <dbReference type="ChEBI" id="CHEBI:18035"/>
        <dbReference type="ChEBI" id="CHEBI:28868"/>
        <dbReference type="EC" id="3.1.1.3"/>
    </reaction>
</comment>
<comment type="similarity">
    <text evidence="4">Belongs to the type-B carboxylesterase/lipase family.</text>
</comment>
<name>LIP3_YARLI</name>
<evidence type="ECO:0000250" key="1"/>
<evidence type="ECO:0000255" key="2"/>
<evidence type="ECO:0000255" key="3">
    <source>
        <dbReference type="PROSITE-ProRule" id="PRU10039"/>
    </source>
</evidence>
<evidence type="ECO:0000305" key="4"/>
<reference key="1">
    <citation type="submission" date="1999-09" db="EMBL/GenBank/DDBJ databases">
        <title>Isolation and characterization of genes encoding lipase activities in Yarrowia lipolytica.</title>
        <authorList>
            <person name="Choupina A."/>
        </authorList>
    </citation>
    <scope>NUCLEOTIDE SEQUENCE [GENOMIC DNA]</scope>
    <source>
        <strain>INAG135668</strain>
    </source>
</reference>
<reference key="2">
    <citation type="journal article" date="2004" name="Nature">
        <title>Genome evolution in yeasts.</title>
        <authorList>
            <person name="Dujon B."/>
            <person name="Sherman D."/>
            <person name="Fischer G."/>
            <person name="Durrens P."/>
            <person name="Casaregola S."/>
            <person name="Lafontaine I."/>
            <person name="de Montigny J."/>
            <person name="Marck C."/>
            <person name="Neuveglise C."/>
            <person name="Talla E."/>
            <person name="Goffard N."/>
            <person name="Frangeul L."/>
            <person name="Aigle M."/>
            <person name="Anthouard V."/>
            <person name="Babour A."/>
            <person name="Barbe V."/>
            <person name="Barnay S."/>
            <person name="Blanchin S."/>
            <person name="Beckerich J.-M."/>
            <person name="Beyne E."/>
            <person name="Bleykasten C."/>
            <person name="Boisrame A."/>
            <person name="Boyer J."/>
            <person name="Cattolico L."/>
            <person name="Confanioleri F."/>
            <person name="de Daruvar A."/>
            <person name="Despons L."/>
            <person name="Fabre E."/>
            <person name="Fairhead C."/>
            <person name="Ferry-Dumazet H."/>
            <person name="Groppi A."/>
            <person name="Hantraye F."/>
            <person name="Hennequin C."/>
            <person name="Jauniaux N."/>
            <person name="Joyet P."/>
            <person name="Kachouri R."/>
            <person name="Kerrest A."/>
            <person name="Koszul R."/>
            <person name="Lemaire M."/>
            <person name="Lesur I."/>
            <person name="Ma L."/>
            <person name="Muller H."/>
            <person name="Nicaud J.-M."/>
            <person name="Nikolski M."/>
            <person name="Oztas S."/>
            <person name="Ozier-Kalogeropoulos O."/>
            <person name="Pellenz S."/>
            <person name="Potier S."/>
            <person name="Richard G.-F."/>
            <person name="Straub M.-L."/>
            <person name="Suleau A."/>
            <person name="Swennen D."/>
            <person name="Tekaia F."/>
            <person name="Wesolowski-Louvel M."/>
            <person name="Westhof E."/>
            <person name="Wirth B."/>
            <person name="Zeniou-Meyer M."/>
            <person name="Zivanovic Y."/>
            <person name="Bolotin-Fukuhara M."/>
            <person name="Thierry A."/>
            <person name="Bouchier C."/>
            <person name="Caudron B."/>
            <person name="Scarpelli C."/>
            <person name="Gaillardin C."/>
            <person name="Weissenbach J."/>
            <person name="Wincker P."/>
            <person name="Souciet J.-L."/>
        </authorList>
    </citation>
    <scope>NUCLEOTIDE SEQUENCE [LARGE SCALE GENOMIC DNA]</scope>
    <source>
        <strain>CLIB 122 / E 150</strain>
    </source>
</reference>
<accession>Q96VC9</accession>
<accession>Q6CFD8</accession>
<keyword id="KW-1015">Disulfide bond</keyword>
<keyword id="KW-0325">Glycoprotein</keyword>
<keyword id="KW-0378">Hydrolase</keyword>
<keyword id="KW-0442">Lipid degradation</keyword>
<keyword id="KW-0443">Lipid metabolism</keyword>
<keyword id="KW-1185">Reference proteome</keyword>
<keyword id="KW-0732">Signal</keyword>
<sequence length="498" mass="55872">MPLELPSLNASIVGNTVQNGAVEQFLNIRYADIPGKFEKPVLKNDWNGAEIDATKVGPVCPQPRTPFNFFSVPDDLWEKVNVDTYQDGLLCDNLIVTRPKGVSANARLPTVVWIHGGSNIEGSIYNLIYEPQFLVAESVRVGKPIVHVCIEYRLGLAGFLTKNGKGNWGTWDQYTGCQWVNRHIQDFGGDPLNVTLTGESAGSVAVHNMLIKDSMNGRKLFRNAVMMSGTLETITPQPPKWHARLEEKVAKVTGKEVADLASLSDKELLDAQIKLNVAVCMTCDDGDFFEPGWKQHLTPDWLDKLIISDCKDEGMLYFLPVNAQDDEELLAKVAKSPVGKEISELYGIKEGGDIKSACLDLKTDATFNYFNHLLFKKMEEARNNGSTSRVYRLAVDEPNPHNPDQRAHHAVDVLYMFNSTKFNEHGDKLSRLFQSHFLRLAYGLEPWDHRNFGVYRNGGYQQLPLSELNKVRPVERYEALSKMDFGQVGRLSNALSRL</sequence>